<protein>
    <recommendedName>
        <fullName evidence="1">Ribose-5-phosphate isomerase A</fullName>
        <ecNumber evidence="1">5.3.1.6</ecNumber>
    </recommendedName>
    <alternativeName>
        <fullName evidence="1">Phosphoriboisomerase A</fullName>
        <shortName evidence="1">PRI</shortName>
    </alternativeName>
</protein>
<evidence type="ECO:0000255" key="1">
    <source>
        <dbReference type="HAMAP-Rule" id="MF_00170"/>
    </source>
</evidence>
<proteinExistence type="inferred from homology"/>
<feature type="chain" id="PRO_0000158436" description="Ribose-5-phosphate isomerase A">
    <location>
        <begin position="1"/>
        <end position="218"/>
    </location>
</feature>
<feature type="active site" description="Proton acceptor" evidence="1">
    <location>
        <position position="103"/>
    </location>
</feature>
<feature type="binding site" evidence="1">
    <location>
        <begin position="28"/>
        <end position="31"/>
    </location>
    <ligand>
        <name>substrate</name>
    </ligand>
</feature>
<feature type="binding site" evidence="1">
    <location>
        <begin position="81"/>
        <end position="84"/>
    </location>
    <ligand>
        <name>substrate</name>
    </ligand>
</feature>
<feature type="binding site" evidence="1">
    <location>
        <begin position="94"/>
        <end position="97"/>
    </location>
    <ligand>
        <name>substrate</name>
    </ligand>
</feature>
<feature type="binding site" evidence="1">
    <location>
        <position position="121"/>
    </location>
    <ligand>
        <name>substrate</name>
    </ligand>
</feature>
<gene>
    <name evidence="1" type="primary">rpiA</name>
    <name type="ordered locus">MCA0355</name>
</gene>
<organism>
    <name type="scientific">Methylococcus capsulatus (strain ATCC 33009 / NCIMB 11132 / Bath)</name>
    <dbReference type="NCBI Taxonomy" id="243233"/>
    <lineage>
        <taxon>Bacteria</taxon>
        <taxon>Pseudomonadati</taxon>
        <taxon>Pseudomonadota</taxon>
        <taxon>Gammaproteobacteria</taxon>
        <taxon>Methylococcales</taxon>
        <taxon>Methylococcaceae</taxon>
        <taxon>Methylococcus</taxon>
    </lineage>
</organism>
<accession>Q60BV9</accession>
<reference key="1">
    <citation type="journal article" date="2004" name="PLoS Biol.">
        <title>Genomic insights into methanotrophy: the complete genome sequence of Methylococcus capsulatus (Bath).</title>
        <authorList>
            <person name="Ward N.L."/>
            <person name="Larsen O."/>
            <person name="Sakwa J."/>
            <person name="Bruseth L."/>
            <person name="Khouri H.M."/>
            <person name="Durkin A.S."/>
            <person name="Dimitrov G."/>
            <person name="Jiang L."/>
            <person name="Scanlan D."/>
            <person name="Kang K.H."/>
            <person name="Lewis M.R."/>
            <person name="Nelson K.E."/>
            <person name="Methe B.A."/>
            <person name="Wu M."/>
            <person name="Heidelberg J.F."/>
            <person name="Paulsen I.T."/>
            <person name="Fouts D.E."/>
            <person name="Ravel J."/>
            <person name="Tettelin H."/>
            <person name="Ren Q."/>
            <person name="Read T.D."/>
            <person name="DeBoy R.T."/>
            <person name="Seshadri R."/>
            <person name="Salzberg S.L."/>
            <person name="Jensen H.B."/>
            <person name="Birkeland N.K."/>
            <person name="Nelson W.C."/>
            <person name="Dodson R.J."/>
            <person name="Grindhaug S.H."/>
            <person name="Holt I.E."/>
            <person name="Eidhammer I."/>
            <person name="Jonasen I."/>
            <person name="Vanaken S."/>
            <person name="Utterback T.R."/>
            <person name="Feldblyum T.V."/>
            <person name="Fraser C.M."/>
            <person name="Lillehaug J.R."/>
            <person name="Eisen J.A."/>
        </authorList>
    </citation>
    <scope>NUCLEOTIDE SEQUENCE [LARGE SCALE GENOMIC DNA]</scope>
    <source>
        <strain>ATCC 33009 / NCIMB 11132 / Bath</strain>
    </source>
</reference>
<keyword id="KW-0413">Isomerase</keyword>
<keyword id="KW-1185">Reference proteome</keyword>
<comment type="function">
    <text evidence="1">Catalyzes the reversible conversion of ribose-5-phosphate to ribulose 5-phosphate.</text>
</comment>
<comment type="catalytic activity">
    <reaction evidence="1">
        <text>aldehydo-D-ribose 5-phosphate = D-ribulose 5-phosphate</text>
        <dbReference type="Rhea" id="RHEA:14657"/>
        <dbReference type="ChEBI" id="CHEBI:58121"/>
        <dbReference type="ChEBI" id="CHEBI:58273"/>
        <dbReference type="EC" id="5.3.1.6"/>
    </reaction>
</comment>
<comment type="pathway">
    <text evidence="1">Carbohydrate degradation; pentose phosphate pathway; D-ribose 5-phosphate from D-ribulose 5-phosphate (non-oxidative stage): step 1/1.</text>
</comment>
<comment type="subunit">
    <text evidence="1">Homodimer.</text>
</comment>
<comment type="similarity">
    <text evidence="1">Belongs to the ribose 5-phosphate isomerase family.</text>
</comment>
<sequence>MTQDELKRKVAEAALDYVKDVTILGVGTGSTVNHFIDLLADLKGGIEGAVSSSQASSERLKKIGIPVLDLNAAGTLDVYVDGADEVNAAKQMIKGGGAALTREKIVAEASRKFVCIVDETKCVDVLGKFPLPVEVIPMARSLVARRLVELGGTPVWRENCITDNGNVILDVHNLTITDPVELERRINDIPGVVCNGVFALRPADVVLIGSPSGVRTLP</sequence>
<name>RPIA_METCA</name>
<dbReference type="EC" id="5.3.1.6" evidence="1"/>
<dbReference type="EMBL" id="AE017282">
    <property type="protein sequence ID" value="AAU90531.1"/>
    <property type="molecule type" value="Genomic_DNA"/>
</dbReference>
<dbReference type="RefSeq" id="WP_010959716.1">
    <property type="nucleotide sequence ID" value="NC_002977.6"/>
</dbReference>
<dbReference type="SMR" id="Q60BV9"/>
<dbReference type="STRING" id="243233.MCA0355"/>
<dbReference type="GeneID" id="88222696"/>
<dbReference type="KEGG" id="mca:MCA0355"/>
<dbReference type="eggNOG" id="COG0120">
    <property type="taxonomic scope" value="Bacteria"/>
</dbReference>
<dbReference type="HOGENOM" id="CLU_056590_1_1_6"/>
<dbReference type="UniPathway" id="UPA00115">
    <property type="reaction ID" value="UER00412"/>
</dbReference>
<dbReference type="Proteomes" id="UP000006821">
    <property type="component" value="Chromosome"/>
</dbReference>
<dbReference type="GO" id="GO:0005829">
    <property type="term" value="C:cytosol"/>
    <property type="evidence" value="ECO:0007669"/>
    <property type="project" value="TreeGrafter"/>
</dbReference>
<dbReference type="GO" id="GO:0004751">
    <property type="term" value="F:ribose-5-phosphate isomerase activity"/>
    <property type="evidence" value="ECO:0007669"/>
    <property type="project" value="UniProtKB-UniRule"/>
</dbReference>
<dbReference type="GO" id="GO:0006014">
    <property type="term" value="P:D-ribose metabolic process"/>
    <property type="evidence" value="ECO:0007669"/>
    <property type="project" value="TreeGrafter"/>
</dbReference>
<dbReference type="GO" id="GO:0009052">
    <property type="term" value="P:pentose-phosphate shunt, non-oxidative branch"/>
    <property type="evidence" value="ECO:0007669"/>
    <property type="project" value="UniProtKB-UniRule"/>
</dbReference>
<dbReference type="CDD" id="cd01398">
    <property type="entry name" value="RPI_A"/>
    <property type="match status" value="1"/>
</dbReference>
<dbReference type="FunFam" id="3.30.70.260:FF:000004">
    <property type="entry name" value="Ribose-5-phosphate isomerase A"/>
    <property type="match status" value="1"/>
</dbReference>
<dbReference type="FunFam" id="3.40.50.1360:FF:000001">
    <property type="entry name" value="Ribose-5-phosphate isomerase A"/>
    <property type="match status" value="1"/>
</dbReference>
<dbReference type="Gene3D" id="3.30.70.260">
    <property type="match status" value="1"/>
</dbReference>
<dbReference type="Gene3D" id="3.40.50.1360">
    <property type="match status" value="1"/>
</dbReference>
<dbReference type="HAMAP" id="MF_00170">
    <property type="entry name" value="Rib_5P_isom_A"/>
    <property type="match status" value="1"/>
</dbReference>
<dbReference type="InterPro" id="IPR037171">
    <property type="entry name" value="NagB/RpiA_transferase-like"/>
</dbReference>
<dbReference type="InterPro" id="IPR020672">
    <property type="entry name" value="Ribose5P_isomerase_typA_subgr"/>
</dbReference>
<dbReference type="InterPro" id="IPR004788">
    <property type="entry name" value="Ribose5P_isomerase_type_A"/>
</dbReference>
<dbReference type="NCBIfam" id="NF001924">
    <property type="entry name" value="PRK00702.1"/>
    <property type="match status" value="1"/>
</dbReference>
<dbReference type="NCBIfam" id="TIGR00021">
    <property type="entry name" value="rpiA"/>
    <property type="match status" value="1"/>
</dbReference>
<dbReference type="PANTHER" id="PTHR11934">
    <property type="entry name" value="RIBOSE-5-PHOSPHATE ISOMERASE"/>
    <property type="match status" value="1"/>
</dbReference>
<dbReference type="PANTHER" id="PTHR11934:SF0">
    <property type="entry name" value="RIBOSE-5-PHOSPHATE ISOMERASE"/>
    <property type="match status" value="1"/>
</dbReference>
<dbReference type="Pfam" id="PF06026">
    <property type="entry name" value="Rib_5-P_isom_A"/>
    <property type="match status" value="1"/>
</dbReference>
<dbReference type="SUPFAM" id="SSF75445">
    <property type="entry name" value="D-ribose-5-phosphate isomerase (RpiA), lid domain"/>
    <property type="match status" value="1"/>
</dbReference>
<dbReference type="SUPFAM" id="SSF100950">
    <property type="entry name" value="NagB/RpiA/CoA transferase-like"/>
    <property type="match status" value="1"/>
</dbReference>